<dbReference type="EC" id="1.3.1.98" evidence="1"/>
<dbReference type="EMBL" id="AE016830">
    <property type="protein sequence ID" value="AAO82434.1"/>
    <property type="molecule type" value="Genomic_DNA"/>
</dbReference>
<dbReference type="RefSeq" id="NP_816364.1">
    <property type="nucleotide sequence ID" value="NC_004668.1"/>
</dbReference>
<dbReference type="RefSeq" id="WP_002356404.1">
    <property type="nucleotide sequence ID" value="NZ_KE136528.1"/>
</dbReference>
<dbReference type="SMR" id="Q830P3"/>
<dbReference type="STRING" id="226185.EF_2733"/>
<dbReference type="EnsemblBacteria" id="AAO82434">
    <property type="protein sequence ID" value="AAO82434"/>
    <property type="gene ID" value="EF_2733"/>
</dbReference>
<dbReference type="KEGG" id="efa:EF2733"/>
<dbReference type="PATRIC" id="fig|226185.45.peg.835"/>
<dbReference type="eggNOG" id="COG0812">
    <property type="taxonomic scope" value="Bacteria"/>
</dbReference>
<dbReference type="HOGENOM" id="CLU_035304_1_1_9"/>
<dbReference type="UniPathway" id="UPA00219"/>
<dbReference type="Proteomes" id="UP000001415">
    <property type="component" value="Chromosome"/>
</dbReference>
<dbReference type="GO" id="GO:0005829">
    <property type="term" value="C:cytosol"/>
    <property type="evidence" value="ECO:0007669"/>
    <property type="project" value="TreeGrafter"/>
</dbReference>
<dbReference type="GO" id="GO:0071949">
    <property type="term" value="F:FAD binding"/>
    <property type="evidence" value="ECO:0007669"/>
    <property type="project" value="InterPro"/>
</dbReference>
<dbReference type="GO" id="GO:0008762">
    <property type="term" value="F:UDP-N-acetylmuramate dehydrogenase activity"/>
    <property type="evidence" value="ECO:0007669"/>
    <property type="project" value="UniProtKB-UniRule"/>
</dbReference>
<dbReference type="GO" id="GO:0051301">
    <property type="term" value="P:cell division"/>
    <property type="evidence" value="ECO:0007669"/>
    <property type="project" value="UniProtKB-KW"/>
</dbReference>
<dbReference type="GO" id="GO:0071555">
    <property type="term" value="P:cell wall organization"/>
    <property type="evidence" value="ECO:0007669"/>
    <property type="project" value="UniProtKB-KW"/>
</dbReference>
<dbReference type="GO" id="GO:0009252">
    <property type="term" value="P:peptidoglycan biosynthetic process"/>
    <property type="evidence" value="ECO:0007669"/>
    <property type="project" value="UniProtKB-UniRule"/>
</dbReference>
<dbReference type="GO" id="GO:0008360">
    <property type="term" value="P:regulation of cell shape"/>
    <property type="evidence" value="ECO:0007669"/>
    <property type="project" value="UniProtKB-KW"/>
</dbReference>
<dbReference type="Gene3D" id="3.30.465.10">
    <property type="match status" value="1"/>
</dbReference>
<dbReference type="Gene3D" id="3.90.78.10">
    <property type="entry name" value="UDP-N-acetylenolpyruvoylglucosamine reductase, C-terminal domain"/>
    <property type="match status" value="1"/>
</dbReference>
<dbReference type="Gene3D" id="3.30.43.10">
    <property type="entry name" value="Uridine Diphospho-n-acetylenolpyruvylglucosamine Reductase, domain 2"/>
    <property type="match status" value="1"/>
</dbReference>
<dbReference type="HAMAP" id="MF_00037">
    <property type="entry name" value="MurB"/>
    <property type="match status" value="1"/>
</dbReference>
<dbReference type="InterPro" id="IPR016166">
    <property type="entry name" value="FAD-bd_PCMH"/>
</dbReference>
<dbReference type="InterPro" id="IPR036318">
    <property type="entry name" value="FAD-bd_PCMH-like_sf"/>
</dbReference>
<dbReference type="InterPro" id="IPR016167">
    <property type="entry name" value="FAD-bd_PCMH_sub1"/>
</dbReference>
<dbReference type="InterPro" id="IPR016169">
    <property type="entry name" value="FAD-bd_PCMH_sub2"/>
</dbReference>
<dbReference type="InterPro" id="IPR003170">
    <property type="entry name" value="MurB"/>
</dbReference>
<dbReference type="InterPro" id="IPR011601">
    <property type="entry name" value="MurB_C"/>
</dbReference>
<dbReference type="InterPro" id="IPR036635">
    <property type="entry name" value="MurB_C_sf"/>
</dbReference>
<dbReference type="InterPro" id="IPR006094">
    <property type="entry name" value="Oxid_FAD_bind_N"/>
</dbReference>
<dbReference type="NCBIfam" id="TIGR00179">
    <property type="entry name" value="murB"/>
    <property type="match status" value="1"/>
</dbReference>
<dbReference type="NCBIfam" id="NF010480">
    <property type="entry name" value="PRK13905.1"/>
    <property type="match status" value="1"/>
</dbReference>
<dbReference type="PANTHER" id="PTHR21071">
    <property type="entry name" value="UDP-N-ACETYLENOLPYRUVOYLGLUCOSAMINE REDUCTASE"/>
    <property type="match status" value="1"/>
</dbReference>
<dbReference type="PANTHER" id="PTHR21071:SF4">
    <property type="entry name" value="UDP-N-ACETYLENOLPYRUVOYLGLUCOSAMINE REDUCTASE"/>
    <property type="match status" value="1"/>
</dbReference>
<dbReference type="Pfam" id="PF01565">
    <property type="entry name" value="FAD_binding_4"/>
    <property type="match status" value="1"/>
</dbReference>
<dbReference type="Pfam" id="PF02873">
    <property type="entry name" value="MurB_C"/>
    <property type="match status" value="1"/>
</dbReference>
<dbReference type="SUPFAM" id="SSF56176">
    <property type="entry name" value="FAD-binding/transporter-associated domain-like"/>
    <property type="match status" value="1"/>
</dbReference>
<dbReference type="SUPFAM" id="SSF56194">
    <property type="entry name" value="Uridine diphospho-N-Acetylenolpyruvylglucosamine reductase, MurB, C-terminal domain"/>
    <property type="match status" value="1"/>
</dbReference>
<dbReference type="PROSITE" id="PS51387">
    <property type="entry name" value="FAD_PCMH"/>
    <property type="match status" value="1"/>
</dbReference>
<proteinExistence type="inferred from homology"/>
<evidence type="ECO:0000255" key="1">
    <source>
        <dbReference type="HAMAP-Rule" id="MF_00037"/>
    </source>
</evidence>
<reference key="1">
    <citation type="journal article" date="2003" name="Science">
        <title>Role of mobile DNA in the evolution of vancomycin-resistant Enterococcus faecalis.</title>
        <authorList>
            <person name="Paulsen I.T."/>
            <person name="Banerjei L."/>
            <person name="Myers G.S.A."/>
            <person name="Nelson K.E."/>
            <person name="Seshadri R."/>
            <person name="Read T.D."/>
            <person name="Fouts D.E."/>
            <person name="Eisen J.A."/>
            <person name="Gill S.R."/>
            <person name="Heidelberg J.F."/>
            <person name="Tettelin H."/>
            <person name="Dodson R.J."/>
            <person name="Umayam L.A."/>
            <person name="Brinkac L.M."/>
            <person name="Beanan M.J."/>
            <person name="Daugherty S.C."/>
            <person name="DeBoy R.T."/>
            <person name="Durkin S.A."/>
            <person name="Kolonay J.F."/>
            <person name="Madupu R."/>
            <person name="Nelson W.C."/>
            <person name="Vamathevan J.J."/>
            <person name="Tran B."/>
            <person name="Upton J."/>
            <person name="Hansen T."/>
            <person name="Shetty J."/>
            <person name="Khouri H.M."/>
            <person name="Utterback T.R."/>
            <person name="Radune D."/>
            <person name="Ketchum K.A."/>
            <person name="Dougherty B.A."/>
            <person name="Fraser C.M."/>
        </authorList>
    </citation>
    <scope>NUCLEOTIDE SEQUENCE [LARGE SCALE GENOMIC DNA]</scope>
    <source>
        <strain>ATCC 700802 / V583</strain>
    </source>
</reference>
<organism>
    <name type="scientific">Enterococcus faecalis (strain ATCC 700802 / V583)</name>
    <dbReference type="NCBI Taxonomy" id="226185"/>
    <lineage>
        <taxon>Bacteria</taxon>
        <taxon>Bacillati</taxon>
        <taxon>Bacillota</taxon>
        <taxon>Bacilli</taxon>
        <taxon>Lactobacillales</taxon>
        <taxon>Enterococcaceae</taxon>
        <taxon>Enterococcus</taxon>
    </lineage>
</organism>
<name>MURB_ENTFA</name>
<keyword id="KW-0131">Cell cycle</keyword>
<keyword id="KW-0132">Cell division</keyword>
<keyword id="KW-0133">Cell shape</keyword>
<keyword id="KW-0961">Cell wall biogenesis/degradation</keyword>
<keyword id="KW-0963">Cytoplasm</keyword>
<keyword id="KW-0274">FAD</keyword>
<keyword id="KW-0285">Flavoprotein</keyword>
<keyword id="KW-0521">NADP</keyword>
<keyword id="KW-0560">Oxidoreductase</keyword>
<keyword id="KW-0573">Peptidoglycan synthesis</keyword>
<keyword id="KW-1185">Reference proteome</keyword>
<protein>
    <recommendedName>
        <fullName evidence="1">UDP-N-acetylenolpyruvoylglucosamine reductase</fullName>
        <ecNumber evidence="1">1.3.1.98</ecNumber>
    </recommendedName>
    <alternativeName>
        <fullName evidence="1">UDP-N-acetylmuramate dehydrogenase</fullName>
    </alternativeName>
</protein>
<comment type="function">
    <text evidence="1">Cell wall formation.</text>
</comment>
<comment type="catalytic activity">
    <reaction evidence="1">
        <text>UDP-N-acetyl-alpha-D-muramate + NADP(+) = UDP-N-acetyl-3-O-(1-carboxyvinyl)-alpha-D-glucosamine + NADPH + H(+)</text>
        <dbReference type="Rhea" id="RHEA:12248"/>
        <dbReference type="ChEBI" id="CHEBI:15378"/>
        <dbReference type="ChEBI" id="CHEBI:57783"/>
        <dbReference type="ChEBI" id="CHEBI:58349"/>
        <dbReference type="ChEBI" id="CHEBI:68483"/>
        <dbReference type="ChEBI" id="CHEBI:70757"/>
        <dbReference type="EC" id="1.3.1.98"/>
    </reaction>
</comment>
<comment type="cofactor">
    <cofactor evidence="1">
        <name>FAD</name>
        <dbReference type="ChEBI" id="CHEBI:57692"/>
    </cofactor>
</comment>
<comment type="pathway">
    <text evidence="1">Cell wall biogenesis; peptidoglycan biosynthesis.</text>
</comment>
<comment type="subcellular location">
    <subcellularLocation>
        <location evidence="1">Cytoplasm</location>
    </subcellularLocation>
</comment>
<comment type="similarity">
    <text evidence="1">Belongs to the MurB family.</text>
</comment>
<feature type="chain" id="PRO_0000179210" description="UDP-N-acetylenolpyruvoylglucosamine reductase">
    <location>
        <begin position="1"/>
        <end position="300"/>
    </location>
</feature>
<feature type="domain" description="FAD-binding PCMH-type" evidence="1">
    <location>
        <begin position="28"/>
        <end position="193"/>
    </location>
</feature>
<feature type="active site" evidence="1">
    <location>
        <position position="172"/>
    </location>
</feature>
<feature type="active site" description="Proton donor" evidence="1">
    <location>
        <position position="222"/>
    </location>
</feature>
<feature type="active site" evidence="1">
    <location>
        <position position="292"/>
    </location>
</feature>
<sequence>MNTKAMLETLNEITLLVDEPLKNVTFTKTGGPADVLALPKTKKEVEEIVAYCREQGLSWLVLGNASNLIVRDGGIRDVVIMLTEMKEIKVAGTTMIVDAGAKLIDTTYEALAADLTGFEFACGIPGSVGGAVYMNAGAYGGEIKDVFQSAEVLLADGTIQTMTKEDLNFRYRHSEIQELHCIVLQATFALEKGNHAEIKAQMDELTELRELKQPLEYPSCGSVFKRPVGHFTGKLIQDAGLQGLKWGGAQISEKHAGFIVNIDHATATDYVELIAHIQEVIKEKFDVELQTEVRIIGEEV</sequence>
<accession>Q830P3</accession>
<gene>
    <name evidence="1" type="primary">murB</name>
    <name type="ordered locus">EF_2733</name>
</gene>